<proteinExistence type="inferred from homology"/>
<organism>
    <name type="scientific">Arabidopsis thaliana</name>
    <name type="common">Mouse-ear cress</name>
    <dbReference type="NCBI Taxonomy" id="3702"/>
    <lineage>
        <taxon>Eukaryota</taxon>
        <taxon>Viridiplantae</taxon>
        <taxon>Streptophyta</taxon>
        <taxon>Embryophyta</taxon>
        <taxon>Tracheophyta</taxon>
        <taxon>Spermatophyta</taxon>
        <taxon>Magnoliopsida</taxon>
        <taxon>eudicotyledons</taxon>
        <taxon>Gunneridae</taxon>
        <taxon>Pentapetalae</taxon>
        <taxon>rosids</taxon>
        <taxon>malvids</taxon>
        <taxon>Brassicales</taxon>
        <taxon>Brassicaceae</taxon>
        <taxon>Camelineae</taxon>
        <taxon>Arabidopsis</taxon>
    </lineage>
</organism>
<name>GDL5_ARATH</name>
<reference key="1">
    <citation type="journal article" date="2000" name="Nature">
        <title>Sequence and analysis of chromosome 1 of the plant Arabidopsis thaliana.</title>
        <authorList>
            <person name="Theologis A."/>
            <person name="Ecker J.R."/>
            <person name="Palm C.J."/>
            <person name="Federspiel N.A."/>
            <person name="Kaul S."/>
            <person name="White O."/>
            <person name="Alonso J."/>
            <person name="Altafi H."/>
            <person name="Araujo R."/>
            <person name="Bowman C.L."/>
            <person name="Brooks S.Y."/>
            <person name="Buehler E."/>
            <person name="Chan A."/>
            <person name="Chao Q."/>
            <person name="Chen H."/>
            <person name="Cheuk R.F."/>
            <person name="Chin C.W."/>
            <person name="Chung M.K."/>
            <person name="Conn L."/>
            <person name="Conway A.B."/>
            <person name="Conway A.R."/>
            <person name="Creasy T.H."/>
            <person name="Dewar K."/>
            <person name="Dunn P."/>
            <person name="Etgu P."/>
            <person name="Feldblyum T.V."/>
            <person name="Feng J.-D."/>
            <person name="Fong B."/>
            <person name="Fujii C.Y."/>
            <person name="Gill J.E."/>
            <person name="Goldsmith A.D."/>
            <person name="Haas B."/>
            <person name="Hansen N.F."/>
            <person name="Hughes B."/>
            <person name="Huizar L."/>
            <person name="Hunter J.L."/>
            <person name="Jenkins J."/>
            <person name="Johnson-Hopson C."/>
            <person name="Khan S."/>
            <person name="Khaykin E."/>
            <person name="Kim C.J."/>
            <person name="Koo H.L."/>
            <person name="Kremenetskaia I."/>
            <person name="Kurtz D.B."/>
            <person name="Kwan A."/>
            <person name="Lam B."/>
            <person name="Langin-Hooper S."/>
            <person name="Lee A."/>
            <person name="Lee J.M."/>
            <person name="Lenz C.A."/>
            <person name="Li J.H."/>
            <person name="Li Y.-P."/>
            <person name="Lin X."/>
            <person name="Liu S.X."/>
            <person name="Liu Z.A."/>
            <person name="Luros J.S."/>
            <person name="Maiti R."/>
            <person name="Marziali A."/>
            <person name="Militscher J."/>
            <person name="Miranda M."/>
            <person name="Nguyen M."/>
            <person name="Nierman W.C."/>
            <person name="Osborne B.I."/>
            <person name="Pai G."/>
            <person name="Peterson J."/>
            <person name="Pham P.K."/>
            <person name="Rizzo M."/>
            <person name="Rooney T."/>
            <person name="Rowley D."/>
            <person name="Sakano H."/>
            <person name="Salzberg S.L."/>
            <person name="Schwartz J.R."/>
            <person name="Shinn P."/>
            <person name="Southwick A.M."/>
            <person name="Sun H."/>
            <person name="Tallon L.J."/>
            <person name="Tambunga G."/>
            <person name="Toriumi M.J."/>
            <person name="Town C.D."/>
            <person name="Utterback T."/>
            <person name="Van Aken S."/>
            <person name="Vaysberg M."/>
            <person name="Vysotskaia V.S."/>
            <person name="Walker M."/>
            <person name="Wu D."/>
            <person name="Yu G."/>
            <person name="Fraser C.M."/>
            <person name="Venter J.C."/>
            <person name="Davis R.W."/>
        </authorList>
    </citation>
    <scope>NUCLEOTIDE SEQUENCE [LARGE SCALE GENOMIC DNA]</scope>
    <source>
        <strain>cv. Columbia</strain>
    </source>
</reference>
<reference key="2">
    <citation type="journal article" date="2017" name="Plant J.">
        <title>Araport11: a complete reannotation of the Arabidopsis thaliana reference genome.</title>
        <authorList>
            <person name="Cheng C.Y."/>
            <person name="Krishnakumar V."/>
            <person name="Chan A.P."/>
            <person name="Thibaud-Nissen F."/>
            <person name="Schobel S."/>
            <person name="Town C.D."/>
        </authorList>
    </citation>
    <scope>GENOME REANNOTATION</scope>
    <source>
        <strain>cv. Columbia</strain>
    </source>
</reference>
<reference key="3">
    <citation type="journal article" date="2004" name="Prog. Lipid Res.">
        <title>GDSL family of serine esterases/lipases.</title>
        <authorList>
            <person name="Akoh C.C."/>
            <person name="Lee G.-C."/>
            <person name="Liaw Y.-C."/>
            <person name="Huang T.-H."/>
            <person name="Shaw J.-F."/>
        </authorList>
    </citation>
    <scope>REVIEW</scope>
</reference>
<reference key="4">
    <citation type="journal article" date="2008" name="Pak. J. Biol. Sci.">
        <title>Sequence analysis of GDSL lipase gene family in Arabidopsis thaliana.</title>
        <authorList>
            <person name="Ling H."/>
        </authorList>
    </citation>
    <scope>GENE FAMILY</scope>
</reference>
<evidence type="ECO:0000250" key="1"/>
<evidence type="ECO:0000255" key="2"/>
<evidence type="ECO:0000305" key="3"/>
<accession>Q9ZUE4</accession>
<accession>Q9LQC7</accession>
<dbReference type="EC" id="3.1.1.-"/>
<dbReference type="EMBL" id="AC005990">
    <property type="protein sequence ID" value="AAC98006.1"/>
    <property type="molecule type" value="Genomic_DNA"/>
</dbReference>
<dbReference type="EMBL" id="AC007945">
    <property type="protein sequence ID" value="AAF79588.1"/>
    <property type="status" value="ALT_SEQ"/>
    <property type="molecule type" value="Genomic_DNA"/>
</dbReference>
<dbReference type="EMBL" id="CP002684">
    <property type="protein sequence ID" value="AEE30395.1"/>
    <property type="molecule type" value="Genomic_DNA"/>
</dbReference>
<dbReference type="PIR" id="F86368">
    <property type="entry name" value="F86368"/>
</dbReference>
<dbReference type="RefSeq" id="NP_173764.1">
    <property type="nucleotide sequence ID" value="NM_102199.1"/>
</dbReference>
<dbReference type="SMR" id="Q9ZUE4"/>
<dbReference type="FunCoup" id="Q9ZUE4">
    <property type="interactions" value="95"/>
</dbReference>
<dbReference type="GlyGen" id="Q9ZUE4">
    <property type="glycosylation" value="1 site"/>
</dbReference>
<dbReference type="PaxDb" id="3702-AT1G23500.1"/>
<dbReference type="ProteomicsDB" id="221982"/>
<dbReference type="EnsemblPlants" id="AT1G23500.1">
    <property type="protein sequence ID" value="AT1G23500.1"/>
    <property type="gene ID" value="AT1G23500"/>
</dbReference>
<dbReference type="GeneID" id="838958"/>
<dbReference type="Gramene" id="AT1G23500.1">
    <property type="protein sequence ID" value="AT1G23500.1"/>
    <property type="gene ID" value="AT1G23500"/>
</dbReference>
<dbReference type="KEGG" id="ath:AT1G23500"/>
<dbReference type="Araport" id="AT1G23500"/>
<dbReference type="TAIR" id="AT1G23500"/>
<dbReference type="eggNOG" id="ENOG502R6GS">
    <property type="taxonomic scope" value="Eukaryota"/>
</dbReference>
<dbReference type="HOGENOM" id="CLU_015101_0_1_1"/>
<dbReference type="InParanoid" id="Q9ZUE4"/>
<dbReference type="OMA" id="CNFFPYG"/>
<dbReference type="PhylomeDB" id="Q9ZUE4"/>
<dbReference type="BioCyc" id="ARA:AT1G23500-MONOMER"/>
<dbReference type="PRO" id="PR:Q9ZUE4"/>
<dbReference type="Proteomes" id="UP000006548">
    <property type="component" value="Chromosome 1"/>
</dbReference>
<dbReference type="ExpressionAtlas" id="Q9ZUE4">
    <property type="expression patterns" value="baseline"/>
</dbReference>
<dbReference type="GO" id="GO:0005576">
    <property type="term" value="C:extracellular region"/>
    <property type="evidence" value="ECO:0007669"/>
    <property type="project" value="UniProtKB-SubCell"/>
</dbReference>
<dbReference type="GO" id="GO:0016298">
    <property type="term" value="F:lipase activity"/>
    <property type="evidence" value="ECO:0007669"/>
    <property type="project" value="InterPro"/>
</dbReference>
<dbReference type="GO" id="GO:0016042">
    <property type="term" value="P:lipid catabolic process"/>
    <property type="evidence" value="ECO:0007669"/>
    <property type="project" value="UniProtKB-KW"/>
</dbReference>
<dbReference type="CDD" id="cd01837">
    <property type="entry name" value="SGNH_plant_lipase_like"/>
    <property type="match status" value="1"/>
</dbReference>
<dbReference type="FunFam" id="3.40.50.1110:FF:000003">
    <property type="entry name" value="GDSL esterase/lipase APG"/>
    <property type="match status" value="1"/>
</dbReference>
<dbReference type="Gene3D" id="3.40.50.1110">
    <property type="entry name" value="SGNH hydrolase"/>
    <property type="match status" value="1"/>
</dbReference>
<dbReference type="InterPro" id="IPR001087">
    <property type="entry name" value="GDSL"/>
</dbReference>
<dbReference type="InterPro" id="IPR050592">
    <property type="entry name" value="GDSL_lipolytic_enzyme"/>
</dbReference>
<dbReference type="InterPro" id="IPR008265">
    <property type="entry name" value="Lipase_GDSL_AS"/>
</dbReference>
<dbReference type="InterPro" id="IPR036514">
    <property type="entry name" value="SGNH_hydro_sf"/>
</dbReference>
<dbReference type="InterPro" id="IPR035669">
    <property type="entry name" value="SGNH_plant_lipase-like"/>
</dbReference>
<dbReference type="PANTHER" id="PTHR45642">
    <property type="entry name" value="GDSL ESTERASE/LIPASE EXL3"/>
    <property type="match status" value="1"/>
</dbReference>
<dbReference type="PANTHER" id="PTHR45642:SF52">
    <property type="entry name" value="GDSL-LIKE LIPASE_ACYLHYDROLASE"/>
    <property type="match status" value="1"/>
</dbReference>
<dbReference type="Pfam" id="PF00657">
    <property type="entry name" value="Lipase_GDSL"/>
    <property type="match status" value="1"/>
</dbReference>
<dbReference type="SUPFAM" id="SSF52266">
    <property type="entry name" value="SGNH hydrolase"/>
    <property type="match status" value="1"/>
</dbReference>
<dbReference type="PROSITE" id="PS01098">
    <property type="entry name" value="LIPASE_GDSL_SER"/>
    <property type="match status" value="1"/>
</dbReference>
<sequence>MNFSLLSTMLMALSSVCLFFVGYAQQFSGSVAVSALFAFGDSILDTGNNNNLNTLSKCNFFPYGRNFIGGKATGRFGNGRVFSDMIAEGLNVKKLLPAYRDPNLSKNDLPTGVCFASGGSGLDERTARSQGVIWVPDQVKDFKEYIMKLNGVVRDKRKVNAIISNAVYLISAGNNDLAITYPTLMAQYTVSTYTDLLVTWTDNLLKSLYAMGARKFAVLGTLPLGCLPGARHTGGNFGNICLVPINQVAAIFNQKLSAKLNNLHTILPGAKFVYVDMYNPLLNLINNPRASGFIDVADGCCCMPTSPVPCPDASQYVFWDFAHPSEKSYMTIAPKIIEGIKKNLA</sequence>
<protein>
    <recommendedName>
        <fullName>GDSL esterase/lipase At1g23500</fullName>
        <ecNumber>3.1.1.-</ecNumber>
    </recommendedName>
    <alternativeName>
        <fullName>Extracellular lipase At1g23500</fullName>
    </alternativeName>
</protein>
<comment type="subcellular location">
    <subcellularLocation>
        <location evidence="3">Secreted</location>
    </subcellularLocation>
</comment>
<comment type="similarity">
    <text evidence="3">Belongs to the 'GDSL' lipolytic enzyme family.</text>
</comment>
<comment type="sequence caution" evidence="3">
    <conflict type="erroneous gene model prediction">
        <sequence resource="EMBL-CDS" id="AAF79588"/>
    </conflict>
</comment>
<keyword id="KW-0325">Glycoprotein</keyword>
<keyword id="KW-0378">Hydrolase</keyword>
<keyword id="KW-0442">Lipid degradation</keyword>
<keyword id="KW-0443">Lipid metabolism</keyword>
<keyword id="KW-1185">Reference proteome</keyword>
<keyword id="KW-0964">Secreted</keyword>
<keyword id="KW-0732">Signal</keyword>
<feature type="signal peptide" evidence="2">
    <location>
        <begin position="1"/>
        <end position="24"/>
    </location>
</feature>
<feature type="chain" id="PRO_0000367347" description="GDSL esterase/lipase At1g23500">
    <location>
        <begin position="25"/>
        <end position="345"/>
    </location>
</feature>
<feature type="active site" description="Nucleophile" evidence="1">
    <location>
        <position position="42"/>
    </location>
</feature>
<feature type="active site" evidence="1">
    <location>
        <position position="320"/>
    </location>
</feature>
<feature type="active site" evidence="1">
    <location>
        <position position="323"/>
    </location>
</feature>
<feature type="glycosylation site" description="N-linked (GlcNAc...) asparagine" evidence="2">
    <location>
        <position position="103"/>
    </location>
</feature>
<gene>
    <name type="ordered locus">At1g23500</name>
    <name type="ORF">F28C11.13</name>
    <name type="ORF">F5O8.6</name>
</gene>